<sequence>MPSLKDLRNRIASVKATQKITKAMQMVAAAKLRRAQEAAEAARPYAERMDAVLANVSASISGADAPPLMAGTGKDDVHLVVVCTADRGLAGSFNSQIARLAREHIRKLQANGRQVKIITVGKKGYDLLRRDFGKLVIDRIELREVKQIGFANADAIAKKVIGLFEAGEFDVCTLIYSRFKSVISQIPTEQQIIPAAVPQAEGESTGAIYEYEPDAGAILADLIPRNIAVQIFRALLENAAGEMGAKMTAMDNATRNAGEMINKLTITYNRQRQAQITKELIEIISGAEAL</sequence>
<comment type="function">
    <text evidence="1">Produces ATP from ADP in the presence of a proton gradient across the membrane. The gamma chain is believed to be important in regulating ATPase activity and the flow of protons through the CF(0) complex.</text>
</comment>
<comment type="subunit">
    <text evidence="1">F-type ATPases have 2 components, CF(1) - the catalytic core - and CF(0) - the membrane proton channel. CF(1) has five subunits: alpha(3), beta(3), gamma(1), delta(1), epsilon(1). CF(0) has three main subunits: a, b and c.</text>
</comment>
<comment type="subcellular location">
    <subcellularLocation>
        <location evidence="1">Cell inner membrane</location>
        <topology evidence="1">Peripheral membrane protein</topology>
    </subcellularLocation>
</comment>
<comment type="similarity">
    <text evidence="1">Belongs to the ATPase gamma chain family.</text>
</comment>
<name>ATPG_CHESB</name>
<protein>
    <recommendedName>
        <fullName evidence="1">ATP synthase gamma chain</fullName>
    </recommendedName>
    <alternativeName>
        <fullName evidence="1">ATP synthase F1 sector gamma subunit</fullName>
    </alternativeName>
    <alternativeName>
        <fullName evidence="1">F-ATPase gamma subunit</fullName>
    </alternativeName>
</protein>
<proteinExistence type="inferred from homology"/>
<organism>
    <name type="scientific">Chelativorans sp. (strain BNC1)</name>
    <dbReference type="NCBI Taxonomy" id="266779"/>
    <lineage>
        <taxon>Bacteria</taxon>
        <taxon>Pseudomonadati</taxon>
        <taxon>Pseudomonadota</taxon>
        <taxon>Alphaproteobacteria</taxon>
        <taxon>Hyphomicrobiales</taxon>
        <taxon>Phyllobacteriaceae</taxon>
        <taxon>Chelativorans</taxon>
    </lineage>
</organism>
<accession>Q11DD6</accession>
<gene>
    <name evidence="1" type="primary">atpG</name>
    <name type="ordered locus">Meso_3217</name>
</gene>
<dbReference type="EMBL" id="CP000390">
    <property type="protein sequence ID" value="ABG64589.1"/>
    <property type="molecule type" value="Genomic_DNA"/>
</dbReference>
<dbReference type="SMR" id="Q11DD6"/>
<dbReference type="STRING" id="266779.Meso_3217"/>
<dbReference type="KEGG" id="mes:Meso_3217"/>
<dbReference type="eggNOG" id="COG0224">
    <property type="taxonomic scope" value="Bacteria"/>
</dbReference>
<dbReference type="HOGENOM" id="CLU_050669_0_1_5"/>
<dbReference type="OrthoDB" id="9812769at2"/>
<dbReference type="GO" id="GO:0005886">
    <property type="term" value="C:plasma membrane"/>
    <property type="evidence" value="ECO:0007669"/>
    <property type="project" value="UniProtKB-SubCell"/>
</dbReference>
<dbReference type="GO" id="GO:0045259">
    <property type="term" value="C:proton-transporting ATP synthase complex"/>
    <property type="evidence" value="ECO:0007669"/>
    <property type="project" value="UniProtKB-KW"/>
</dbReference>
<dbReference type="GO" id="GO:0005524">
    <property type="term" value="F:ATP binding"/>
    <property type="evidence" value="ECO:0007669"/>
    <property type="project" value="UniProtKB-UniRule"/>
</dbReference>
<dbReference type="GO" id="GO:0046933">
    <property type="term" value="F:proton-transporting ATP synthase activity, rotational mechanism"/>
    <property type="evidence" value="ECO:0007669"/>
    <property type="project" value="UniProtKB-UniRule"/>
</dbReference>
<dbReference type="GO" id="GO:0042777">
    <property type="term" value="P:proton motive force-driven plasma membrane ATP synthesis"/>
    <property type="evidence" value="ECO:0007669"/>
    <property type="project" value="UniProtKB-UniRule"/>
</dbReference>
<dbReference type="CDD" id="cd12151">
    <property type="entry name" value="F1-ATPase_gamma"/>
    <property type="match status" value="1"/>
</dbReference>
<dbReference type="FunFam" id="1.10.287.80:FF:000001">
    <property type="entry name" value="ATP synthase gamma chain"/>
    <property type="match status" value="1"/>
</dbReference>
<dbReference type="FunFam" id="1.10.287.80:FF:000003">
    <property type="entry name" value="ATP synthase gamma chain, chloroplastic"/>
    <property type="match status" value="1"/>
</dbReference>
<dbReference type="Gene3D" id="3.40.1380.10">
    <property type="match status" value="1"/>
</dbReference>
<dbReference type="Gene3D" id="1.10.287.80">
    <property type="entry name" value="ATP synthase, gamma subunit, helix hairpin domain"/>
    <property type="match status" value="1"/>
</dbReference>
<dbReference type="HAMAP" id="MF_00815">
    <property type="entry name" value="ATP_synth_gamma_bact"/>
    <property type="match status" value="1"/>
</dbReference>
<dbReference type="InterPro" id="IPR035968">
    <property type="entry name" value="ATP_synth_F1_ATPase_gsu"/>
</dbReference>
<dbReference type="InterPro" id="IPR000131">
    <property type="entry name" value="ATP_synth_F1_gsu"/>
</dbReference>
<dbReference type="InterPro" id="IPR023632">
    <property type="entry name" value="ATP_synth_F1_gsu_CS"/>
</dbReference>
<dbReference type="NCBIfam" id="TIGR01146">
    <property type="entry name" value="ATPsyn_F1gamma"/>
    <property type="match status" value="1"/>
</dbReference>
<dbReference type="NCBIfam" id="NF004146">
    <property type="entry name" value="PRK05621.1-4"/>
    <property type="match status" value="1"/>
</dbReference>
<dbReference type="PANTHER" id="PTHR11693">
    <property type="entry name" value="ATP SYNTHASE GAMMA CHAIN"/>
    <property type="match status" value="1"/>
</dbReference>
<dbReference type="PANTHER" id="PTHR11693:SF22">
    <property type="entry name" value="ATP SYNTHASE SUBUNIT GAMMA, MITOCHONDRIAL"/>
    <property type="match status" value="1"/>
</dbReference>
<dbReference type="Pfam" id="PF00231">
    <property type="entry name" value="ATP-synt"/>
    <property type="match status" value="1"/>
</dbReference>
<dbReference type="PIRSF" id="PIRSF039089">
    <property type="entry name" value="ATP_synthase_gamma"/>
    <property type="match status" value="1"/>
</dbReference>
<dbReference type="PRINTS" id="PR00126">
    <property type="entry name" value="ATPASEGAMMA"/>
</dbReference>
<dbReference type="SUPFAM" id="SSF52943">
    <property type="entry name" value="ATP synthase (F1-ATPase), gamma subunit"/>
    <property type="match status" value="1"/>
</dbReference>
<dbReference type="PROSITE" id="PS00153">
    <property type="entry name" value="ATPASE_GAMMA"/>
    <property type="match status" value="1"/>
</dbReference>
<keyword id="KW-0066">ATP synthesis</keyword>
<keyword id="KW-0997">Cell inner membrane</keyword>
<keyword id="KW-1003">Cell membrane</keyword>
<keyword id="KW-0139">CF(1)</keyword>
<keyword id="KW-0375">Hydrogen ion transport</keyword>
<keyword id="KW-0406">Ion transport</keyword>
<keyword id="KW-0472">Membrane</keyword>
<keyword id="KW-0813">Transport</keyword>
<evidence type="ECO:0000255" key="1">
    <source>
        <dbReference type="HAMAP-Rule" id="MF_00815"/>
    </source>
</evidence>
<feature type="chain" id="PRO_1000053251" description="ATP synthase gamma chain">
    <location>
        <begin position="1"/>
        <end position="290"/>
    </location>
</feature>
<reference key="1">
    <citation type="submission" date="2006-06" db="EMBL/GenBank/DDBJ databases">
        <title>Complete sequence of chromosome of Mesorhizobium sp. BNC1.</title>
        <authorList>
            <consortium name="US DOE Joint Genome Institute"/>
            <person name="Copeland A."/>
            <person name="Lucas S."/>
            <person name="Lapidus A."/>
            <person name="Barry K."/>
            <person name="Detter J.C."/>
            <person name="Glavina del Rio T."/>
            <person name="Hammon N."/>
            <person name="Israni S."/>
            <person name="Dalin E."/>
            <person name="Tice H."/>
            <person name="Pitluck S."/>
            <person name="Chertkov O."/>
            <person name="Brettin T."/>
            <person name="Bruce D."/>
            <person name="Han C."/>
            <person name="Tapia R."/>
            <person name="Gilna P."/>
            <person name="Schmutz J."/>
            <person name="Larimer F."/>
            <person name="Land M."/>
            <person name="Hauser L."/>
            <person name="Kyrpides N."/>
            <person name="Mikhailova N."/>
            <person name="Richardson P."/>
        </authorList>
    </citation>
    <scope>NUCLEOTIDE SEQUENCE [LARGE SCALE GENOMIC DNA]</scope>
    <source>
        <strain>BNC1</strain>
    </source>
</reference>